<organismHost>
    <name type="scientific">Vitis vinifera</name>
    <name type="common">Grape</name>
    <dbReference type="NCBI Taxonomy" id="29760"/>
</organismHost>
<name>P20B_GLRV3</name>
<gene>
    <name type="ORF">ORF19</name>
</gene>
<feature type="chain" id="PRO_0000402524" description="Protein P20B">
    <location>
        <begin position="1"/>
        <end position="179"/>
    </location>
</feature>
<organism>
    <name type="scientific">Grapevine leafroll-associated virus 3 (isolate United States/NY1)</name>
    <name type="common">GLRaV-3</name>
    <name type="synonym">Grapevine leafroll-associated closterovirus (isolate 109)</name>
    <dbReference type="NCBI Taxonomy" id="651354"/>
    <lineage>
        <taxon>Viruses</taxon>
        <taxon>Riboviria</taxon>
        <taxon>Orthornavirae</taxon>
        <taxon>Kitrinoviricota</taxon>
        <taxon>Alsuviricetes</taxon>
        <taxon>Martellivirales</taxon>
        <taxon>Closteroviridae</taxon>
        <taxon>Ampelovirus</taxon>
        <taxon>Grapevine leafroll-associated virus 3</taxon>
    </lineage>
</organism>
<keyword id="KW-1185">Reference proteome</keyword>
<sequence>MDLSFIIVQILSASYNNDVTALYTLINAYNSVDDTTRWAAINDPQAEVNVVKAYVATTATTELHRTILIDSIDSAFAYDQVGCLVGIARGLLRHSEDVLEVIKSMELFEVCRGKRGSKRYLGYLSDQCTNKYMMLTQAGLAAVEGADILRTNHLVSGNKFSPNFGIARMLLLTLCCGAL</sequence>
<accession>O71195</accession>
<protein>
    <recommendedName>
        <fullName>Protein P20B</fullName>
    </recommendedName>
    <alternativeName>
        <fullName>19.7 kDa protein</fullName>
    </alternativeName>
</protein>
<reference key="1">
    <citation type="journal article" date="1998" name="J. Gen. Virol.">
        <title>Nucleotide sequence of the 3'-terminal two-thirds of the grapevine leafroll-associated virus-3 genome reveals a typical monopartite closterovirus.</title>
        <authorList>
            <person name="Ling K.S."/>
            <person name="Zhu H.Y."/>
            <person name="Drong R.F."/>
            <person name="Slightom J.L."/>
            <person name="McFerson J.R."/>
            <person name="Gonsalves D."/>
        </authorList>
    </citation>
    <scope>NUCLEOTIDE SEQUENCE [GENOMIC RNA]</scope>
</reference>
<dbReference type="EMBL" id="AF037268">
    <property type="protein sequence ID" value="AAC40714.1"/>
    <property type="molecule type" value="Genomic_RNA"/>
</dbReference>
<dbReference type="RefSeq" id="NP_813805.1">
    <property type="nucleotide sequence ID" value="NC_004667.1"/>
</dbReference>
<dbReference type="KEGG" id="vg:1444467"/>
<dbReference type="Proteomes" id="UP000006707">
    <property type="component" value="Segment"/>
</dbReference>
<proteinExistence type="predicted"/>